<feature type="chain" id="PRO_1000015958" description="Aspartyl/glutamyl-tRNA(Asn/Gln) amidotransferase subunit B">
    <location>
        <begin position="1"/>
        <end position="476"/>
    </location>
</feature>
<protein>
    <recommendedName>
        <fullName evidence="1">Aspartyl/glutamyl-tRNA(Asn/Gln) amidotransferase subunit B</fullName>
        <shortName evidence="1">Asp/Glu-ADT subunit B</shortName>
        <ecNumber evidence="1">6.3.5.-</ecNumber>
    </recommendedName>
</protein>
<proteinExistence type="inferred from homology"/>
<name>GATB_CLOB1</name>
<reference key="1">
    <citation type="journal article" date="2007" name="PLoS ONE">
        <title>Analysis of the neurotoxin complex genes in Clostridium botulinum A1-A4 and B1 strains: BoNT/A3, /Ba4 and /B1 clusters are located within plasmids.</title>
        <authorList>
            <person name="Smith T.J."/>
            <person name="Hill K.K."/>
            <person name="Foley B.T."/>
            <person name="Detter J.C."/>
            <person name="Munk A.C."/>
            <person name="Bruce D.C."/>
            <person name="Doggett N.A."/>
            <person name="Smith L.A."/>
            <person name="Marks J.D."/>
            <person name="Xie G."/>
            <person name="Brettin T.S."/>
        </authorList>
    </citation>
    <scope>NUCLEOTIDE SEQUENCE [LARGE SCALE GENOMIC DNA]</scope>
    <source>
        <strain>ATCC 19397 / Type A</strain>
    </source>
</reference>
<comment type="function">
    <text evidence="1">Allows the formation of correctly charged Asn-tRNA(Asn) or Gln-tRNA(Gln) through the transamidation of misacylated Asp-tRNA(Asn) or Glu-tRNA(Gln) in organisms which lack either or both of asparaginyl-tRNA or glutaminyl-tRNA synthetases. The reaction takes place in the presence of glutamine and ATP through an activated phospho-Asp-tRNA(Asn) or phospho-Glu-tRNA(Gln).</text>
</comment>
<comment type="catalytic activity">
    <reaction evidence="1">
        <text>L-glutamyl-tRNA(Gln) + L-glutamine + ATP + H2O = L-glutaminyl-tRNA(Gln) + L-glutamate + ADP + phosphate + H(+)</text>
        <dbReference type="Rhea" id="RHEA:17521"/>
        <dbReference type="Rhea" id="RHEA-COMP:9681"/>
        <dbReference type="Rhea" id="RHEA-COMP:9684"/>
        <dbReference type="ChEBI" id="CHEBI:15377"/>
        <dbReference type="ChEBI" id="CHEBI:15378"/>
        <dbReference type="ChEBI" id="CHEBI:29985"/>
        <dbReference type="ChEBI" id="CHEBI:30616"/>
        <dbReference type="ChEBI" id="CHEBI:43474"/>
        <dbReference type="ChEBI" id="CHEBI:58359"/>
        <dbReference type="ChEBI" id="CHEBI:78520"/>
        <dbReference type="ChEBI" id="CHEBI:78521"/>
        <dbReference type="ChEBI" id="CHEBI:456216"/>
    </reaction>
</comment>
<comment type="catalytic activity">
    <reaction evidence="1">
        <text>L-aspartyl-tRNA(Asn) + L-glutamine + ATP + H2O = L-asparaginyl-tRNA(Asn) + L-glutamate + ADP + phosphate + 2 H(+)</text>
        <dbReference type="Rhea" id="RHEA:14513"/>
        <dbReference type="Rhea" id="RHEA-COMP:9674"/>
        <dbReference type="Rhea" id="RHEA-COMP:9677"/>
        <dbReference type="ChEBI" id="CHEBI:15377"/>
        <dbReference type="ChEBI" id="CHEBI:15378"/>
        <dbReference type="ChEBI" id="CHEBI:29985"/>
        <dbReference type="ChEBI" id="CHEBI:30616"/>
        <dbReference type="ChEBI" id="CHEBI:43474"/>
        <dbReference type="ChEBI" id="CHEBI:58359"/>
        <dbReference type="ChEBI" id="CHEBI:78515"/>
        <dbReference type="ChEBI" id="CHEBI:78516"/>
        <dbReference type="ChEBI" id="CHEBI:456216"/>
    </reaction>
</comment>
<comment type="subunit">
    <text evidence="1">Heterotrimer of A, B and C subunits.</text>
</comment>
<comment type="similarity">
    <text evidence="1">Belongs to the GatB/GatE family. GatB subfamily.</text>
</comment>
<organism>
    <name type="scientific">Clostridium botulinum (strain ATCC 19397 / Type A)</name>
    <dbReference type="NCBI Taxonomy" id="441770"/>
    <lineage>
        <taxon>Bacteria</taxon>
        <taxon>Bacillati</taxon>
        <taxon>Bacillota</taxon>
        <taxon>Clostridia</taxon>
        <taxon>Eubacteriales</taxon>
        <taxon>Clostridiaceae</taxon>
        <taxon>Clostridium</taxon>
    </lineage>
</organism>
<evidence type="ECO:0000255" key="1">
    <source>
        <dbReference type="HAMAP-Rule" id="MF_00121"/>
    </source>
</evidence>
<dbReference type="EC" id="6.3.5.-" evidence="1"/>
<dbReference type="EMBL" id="CP000726">
    <property type="protein sequence ID" value="ABS35448.1"/>
    <property type="molecule type" value="Genomic_DNA"/>
</dbReference>
<dbReference type="RefSeq" id="WP_012048223.1">
    <property type="nucleotide sequence ID" value="NC_009697.1"/>
</dbReference>
<dbReference type="SMR" id="A7FYL2"/>
<dbReference type="GeneID" id="5187519"/>
<dbReference type="KEGG" id="cba:CLB_3322"/>
<dbReference type="HOGENOM" id="CLU_019240_0_0_9"/>
<dbReference type="GO" id="GO:0050566">
    <property type="term" value="F:asparaginyl-tRNA synthase (glutamine-hydrolyzing) activity"/>
    <property type="evidence" value="ECO:0007669"/>
    <property type="project" value="RHEA"/>
</dbReference>
<dbReference type="GO" id="GO:0005524">
    <property type="term" value="F:ATP binding"/>
    <property type="evidence" value="ECO:0007669"/>
    <property type="project" value="UniProtKB-KW"/>
</dbReference>
<dbReference type="GO" id="GO:0050567">
    <property type="term" value="F:glutaminyl-tRNA synthase (glutamine-hydrolyzing) activity"/>
    <property type="evidence" value="ECO:0007669"/>
    <property type="project" value="UniProtKB-UniRule"/>
</dbReference>
<dbReference type="GO" id="GO:0070681">
    <property type="term" value="P:glutaminyl-tRNAGln biosynthesis via transamidation"/>
    <property type="evidence" value="ECO:0007669"/>
    <property type="project" value="TreeGrafter"/>
</dbReference>
<dbReference type="GO" id="GO:0006412">
    <property type="term" value="P:translation"/>
    <property type="evidence" value="ECO:0007669"/>
    <property type="project" value="UniProtKB-UniRule"/>
</dbReference>
<dbReference type="FunFam" id="1.10.10.410:FF:000001">
    <property type="entry name" value="Aspartyl/glutamyl-tRNA(Asn/Gln) amidotransferase subunit B"/>
    <property type="match status" value="1"/>
</dbReference>
<dbReference type="FunFam" id="1.10.150.380:FF:000001">
    <property type="entry name" value="Aspartyl/glutamyl-tRNA(Asn/Gln) amidotransferase subunit B"/>
    <property type="match status" value="1"/>
</dbReference>
<dbReference type="Gene3D" id="1.10.10.410">
    <property type="match status" value="1"/>
</dbReference>
<dbReference type="Gene3D" id="1.10.150.380">
    <property type="entry name" value="GatB domain, N-terminal subdomain"/>
    <property type="match status" value="1"/>
</dbReference>
<dbReference type="HAMAP" id="MF_00121">
    <property type="entry name" value="GatB"/>
    <property type="match status" value="1"/>
</dbReference>
<dbReference type="InterPro" id="IPR017959">
    <property type="entry name" value="Asn/Gln-tRNA_amidoTrfase_suB/E"/>
</dbReference>
<dbReference type="InterPro" id="IPR006075">
    <property type="entry name" value="Asn/Gln-tRNA_Trfase_suB/E_cat"/>
</dbReference>
<dbReference type="InterPro" id="IPR018027">
    <property type="entry name" value="Asn/Gln_amidotransferase"/>
</dbReference>
<dbReference type="InterPro" id="IPR003789">
    <property type="entry name" value="Asn/Gln_tRNA_amidoTrase-B-like"/>
</dbReference>
<dbReference type="InterPro" id="IPR004413">
    <property type="entry name" value="GatB"/>
</dbReference>
<dbReference type="InterPro" id="IPR042114">
    <property type="entry name" value="GatB_C_1"/>
</dbReference>
<dbReference type="InterPro" id="IPR023168">
    <property type="entry name" value="GatB_Yqey_C_2"/>
</dbReference>
<dbReference type="InterPro" id="IPR017958">
    <property type="entry name" value="Gln-tRNA_amidoTrfase_suB_CS"/>
</dbReference>
<dbReference type="InterPro" id="IPR014746">
    <property type="entry name" value="Gln_synth/guanido_kin_cat_dom"/>
</dbReference>
<dbReference type="NCBIfam" id="TIGR00133">
    <property type="entry name" value="gatB"/>
    <property type="match status" value="1"/>
</dbReference>
<dbReference type="NCBIfam" id="NF004012">
    <property type="entry name" value="PRK05477.1-2"/>
    <property type="match status" value="1"/>
</dbReference>
<dbReference type="NCBIfam" id="NF004014">
    <property type="entry name" value="PRK05477.1-4"/>
    <property type="match status" value="1"/>
</dbReference>
<dbReference type="PANTHER" id="PTHR11659">
    <property type="entry name" value="GLUTAMYL-TRNA GLN AMIDOTRANSFERASE SUBUNIT B MITOCHONDRIAL AND PROKARYOTIC PET112-RELATED"/>
    <property type="match status" value="1"/>
</dbReference>
<dbReference type="PANTHER" id="PTHR11659:SF0">
    <property type="entry name" value="GLUTAMYL-TRNA(GLN) AMIDOTRANSFERASE SUBUNIT B, MITOCHONDRIAL"/>
    <property type="match status" value="1"/>
</dbReference>
<dbReference type="Pfam" id="PF02934">
    <property type="entry name" value="GatB_N"/>
    <property type="match status" value="1"/>
</dbReference>
<dbReference type="Pfam" id="PF02637">
    <property type="entry name" value="GatB_Yqey"/>
    <property type="match status" value="1"/>
</dbReference>
<dbReference type="SMART" id="SM00845">
    <property type="entry name" value="GatB_Yqey"/>
    <property type="match status" value="1"/>
</dbReference>
<dbReference type="SUPFAM" id="SSF89095">
    <property type="entry name" value="GatB/YqeY motif"/>
    <property type="match status" value="1"/>
</dbReference>
<dbReference type="SUPFAM" id="SSF55931">
    <property type="entry name" value="Glutamine synthetase/guanido kinase"/>
    <property type="match status" value="1"/>
</dbReference>
<dbReference type="PROSITE" id="PS01234">
    <property type="entry name" value="GATB"/>
    <property type="match status" value="1"/>
</dbReference>
<keyword id="KW-0067">ATP-binding</keyword>
<keyword id="KW-0436">Ligase</keyword>
<keyword id="KW-0547">Nucleotide-binding</keyword>
<keyword id="KW-0648">Protein biosynthesis</keyword>
<sequence length="476" mass="53657">MDFEAVIGLEVHAELSTNTKIYCGCTTEFGGQPNTHVCPICLGLPGSLPQLNKRVVEYGIKAGLALNCSINKVCRMDRKNYFYPDCPKNYQITQDEVPICRDGYIEIELENGEKKKIGIERIHMEEDAGKLLHTNAGTLVDYNRAGVPLIEIVSRPDIRTPEEATKYLEKLKSILSSIEVSDCKMEQGSLRCDGNISVMPKGSEKFGVRSEIKNMNSFKALEKALSYEYDRHVEAVTKGEILEQETRRWDEANSVTVLMRSKEKANDYRYFPEGDLVTLNISDEWIEEVRKTIPELPHEKAERFVNEFGIPKYDAMVLTLTMDMAKFFEETALKSEDAKAASNWLMGDISRLMNEKAIEVKDLKFNPEQLAQLIKLINAGTISNNIGKKVLDDMFKSGKNPKDIVEEKGLVQNNDEGAILEVVKNIIENNPQSIEDFKNGKKRALGFLVGLVMKETKGKANPQIVNKLVSEEANKM</sequence>
<accession>A7FYL2</accession>
<gene>
    <name evidence="1" type="primary">gatB</name>
    <name type="ordered locus">CLB_3322</name>
</gene>